<keyword id="KW-1185">Reference proteome</keyword>
<keyword id="KW-0833">Ubl conjugation pathway</keyword>
<reference key="1">
    <citation type="journal article" date="2000" name="Nature">
        <title>Sequence and analysis of chromosome 1 of the plant Arabidopsis thaliana.</title>
        <authorList>
            <person name="Theologis A."/>
            <person name="Ecker J.R."/>
            <person name="Palm C.J."/>
            <person name="Federspiel N.A."/>
            <person name="Kaul S."/>
            <person name="White O."/>
            <person name="Alonso J."/>
            <person name="Altafi H."/>
            <person name="Araujo R."/>
            <person name="Bowman C.L."/>
            <person name="Brooks S.Y."/>
            <person name="Buehler E."/>
            <person name="Chan A."/>
            <person name="Chao Q."/>
            <person name="Chen H."/>
            <person name="Cheuk R.F."/>
            <person name="Chin C.W."/>
            <person name="Chung M.K."/>
            <person name="Conn L."/>
            <person name="Conway A.B."/>
            <person name="Conway A.R."/>
            <person name="Creasy T.H."/>
            <person name="Dewar K."/>
            <person name="Dunn P."/>
            <person name="Etgu P."/>
            <person name="Feldblyum T.V."/>
            <person name="Feng J.-D."/>
            <person name="Fong B."/>
            <person name="Fujii C.Y."/>
            <person name="Gill J.E."/>
            <person name="Goldsmith A.D."/>
            <person name="Haas B."/>
            <person name="Hansen N.F."/>
            <person name="Hughes B."/>
            <person name="Huizar L."/>
            <person name="Hunter J.L."/>
            <person name="Jenkins J."/>
            <person name="Johnson-Hopson C."/>
            <person name="Khan S."/>
            <person name="Khaykin E."/>
            <person name="Kim C.J."/>
            <person name="Koo H.L."/>
            <person name="Kremenetskaia I."/>
            <person name="Kurtz D.B."/>
            <person name="Kwan A."/>
            <person name="Lam B."/>
            <person name="Langin-Hooper S."/>
            <person name="Lee A."/>
            <person name="Lee J.M."/>
            <person name="Lenz C.A."/>
            <person name="Li J.H."/>
            <person name="Li Y.-P."/>
            <person name="Lin X."/>
            <person name="Liu S.X."/>
            <person name="Liu Z.A."/>
            <person name="Luros J.S."/>
            <person name="Maiti R."/>
            <person name="Marziali A."/>
            <person name="Militscher J."/>
            <person name="Miranda M."/>
            <person name="Nguyen M."/>
            <person name="Nierman W.C."/>
            <person name="Osborne B.I."/>
            <person name="Pai G."/>
            <person name="Peterson J."/>
            <person name="Pham P.K."/>
            <person name="Rizzo M."/>
            <person name="Rooney T."/>
            <person name="Rowley D."/>
            <person name="Sakano H."/>
            <person name="Salzberg S.L."/>
            <person name="Schwartz J.R."/>
            <person name="Shinn P."/>
            <person name="Southwick A.M."/>
            <person name="Sun H."/>
            <person name="Tallon L.J."/>
            <person name="Tambunga G."/>
            <person name="Toriumi M.J."/>
            <person name="Town C.D."/>
            <person name="Utterback T."/>
            <person name="Van Aken S."/>
            <person name="Vaysberg M."/>
            <person name="Vysotskaia V.S."/>
            <person name="Walker M."/>
            <person name="Wu D."/>
            <person name="Yu G."/>
            <person name="Fraser C.M."/>
            <person name="Venter J.C."/>
            <person name="Davis R.W."/>
        </authorList>
    </citation>
    <scope>NUCLEOTIDE SEQUENCE [LARGE SCALE GENOMIC DNA]</scope>
    <source>
        <strain>cv. Columbia</strain>
    </source>
</reference>
<reference key="2">
    <citation type="journal article" date="2017" name="Plant J.">
        <title>Araport11: a complete reannotation of the Arabidopsis thaliana reference genome.</title>
        <authorList>
            <person name="Cheng C.Y."/>
            <person name="Krishnakumar V."/>
            <person name="Chan A.P."/>
            <person name="Thibaud-Nissen F."/>
            <person name="Schobel S."/>
            <person name="Town C.D."/>
        </authorList>
    </citation>
    <scope>GENOME REANNOTATION</scope>
    <source>
        <strain>cv. Columbia</strain>
    </source>
</reference>
<reference key="3">
    <citation type="journal article" date="2003" name="Science">
        <title>Empirical analysis of transcriptional activity in the Arabidopsis genome.</title>
        <authorList>
            <person name="Yamada K."/>
            <person name="Lim J."/>
            <person name="Dale J.M."/>
            <person name="Chen H."/>
            <person name="Shinn P."/>
            <person name="Palm C.J."/>
            <person name="Southwick A.M."/>
            <person name="Wu H.C."/>
            <person name="Kim C.J."/>
            <person name="Nguyen M."/>
            <person name="Pham P.K."/>
            <person name="Cheuk R.F."/>
            <person name="Karlin-Newmann G."/>
            <person name="Liu S.X."/>
            <person name="Lam B."/>
            <person name="Sakano H."/>
            <person name="Wu T."/>
            <person name="Yu G."/>
            <person name="Miranda M."/>
            <person name="Quach H.L."/>
            <person name="Tripp M."/>
            <person name="Chang C.H."/>
            <person name="Lee J.M."/>
            <person name="Toriumi M.J."/>
            <person name="Chan M.M."/>
            <person name="Tang C.C."/>
            <person name="Onodera C.S."/>
            <person name="Deng J.M."/>
            <person name="Akiyama K."/>
            <person name="Ansari Y."/>
            <person name="Arakawa T."/>
            <person name="Banh J."/>
            <person name="Banno F."/>
            <person name="Bowser L."/>
            <person name="Brooks S.Y."/>
            <person name="Carninci P."/>
            <person name="Chao Q."/>
            <person name="Choy N."/>
            <person name="Enju A."/>
            <person name="Goldsmith A.D."/>
            <person name="Gurjal M."/>
            <person name="Hansen N.F."/>
            <person name="Hayashizaki Y."/>
            <person name="Johnson-Hopson C."/>
            <person name="Hsuan V.W."/>
            <person name="Iida K."/>
            <person name="Karnes M."/>
            <person name="Khan S."/>
            <person name="Koesema E."/>
            <person name="Ishida J."/>
            <person name="Jiang P.X."/>
            <person name="Jones T."/>
            <person name="Kawai J."/>
            <person name="Kamiya A."/>
            <person name="Meyers C."/>
            <person name="Nakajima M."/>
            <person name="Narusaka M."/>
            <person name="Seki M."/>
            <person name="Sakurai T."/>
            <person name="Satou M."/>
            <person name="Tamse R."/>
            <person name="Vaysberg M."/>
            <person name="Wallender E.K."/>
            <person name="Wong C."/>
            <person name="Yamamura Y."/>
            <person name="Yuan S."/>
            <person name="Shinozaki K."/>
            <person name="Davis R.W."/>
            <person name="Theologis A."/>
            <person name="Ecker J.R."/>
        </authorList>
    </citation>
    <scope>NUCLEOTIDE SEQUENCE [LARGE SCALE MRNA]</scope>
    <source>
        <strain>cv. Columbia</strain>
    </source>
</reference>
<reference key="4">
    <citation type="journal article" date="2005" name="J. Biol. Chem.">
        <title>Cullins 3a and 3b assemble with members of the broad complex/tramtrack/bric-a-brac (BTB) protein family to form essential ubiquitin-protein ligases (E3s) in Arabidopsis.</title>
        <authorList>
            <person name="Gingerich D.J."/>
            <person name="Gagne J.M."/>
            <person name="Salter D.W."/>
            <person name="Hellmann H."/>
            <person name="Estelle M."/>
            <person name="Ma L."/>
            <person name="Vierstra R.D."/>
        </authorList>
    </citation>
    <scope>DOMAIN BTB</scope>
</reference>
<protein>
    <recommendedName>
        <fullName>BTB/POZ domain-containing protein At1g50280</fullName>
    </recommendedName>
</protein>
<accession>Q8RXR6</accession>
<accession>Q9SX46</accession>
<name>Y1028_ARATH</name>
<comment type="function">
    <text evidence="1">May act as a substrate-specific adapter of an E3 ubiquitin-protein ligase complex (CUL3-RBX1-BTB) which mediates the ubiquitination and subsequent proteasomal degradation of target proteins.</text>
</comment>
<comment type="pathway">
    <text>Protein modification; protein ubiquitination.</text>
</comment>
<comment type="domain">
    <text evidence="3">The BTB/POZ domain mediates the interaction with some component of ubiquitin ligase complexes.</text>
</comment>
<comment type="similarity">
    <text evidence="2">Belongs to the NPH3 family.</text>
</comment>
<comment type="sequence caution" evidence="4">
    <conflict type="erroneous gene model prediction">
        <sequence resource="EMBL-CDS" id="AAD50054"/>
    </conflict>
</comment>
<sequence>MSPLNDLKINLNGQYTFFLNQNVISKYSGSLRKMIKQSKKKRNKKKRIITIEINDFPGGPDGFELVSRFCYHNGEILIDVSNVSTLYCCSVFLGMSEKFCFSNLFLQTEKFLEEVFYGSWSDIVSCLKNCEQVFFQADSYGLVDKLIFAALNKISQNSDDFSSSSLSSFASSLSPEMAKNTSESDGRYISRSVACGRSNEWWFEDMTNLSPKIILKLVMIIGAYKTNIKSLVLTRFLLHYLKTKLQTKSRTTTELMRNKLEYSDLADTAVRGVISAGTRTFSCRKLFWILRVLSSFSLSRESRIGLETLIGEMLEQATLDDLLISARGSRESGFYNVDLVIRLLKVFVKNREEEEEESRERNMKEIGKLIDKYLREISPDQNLKVPKFLGVAESLPDSARDCFDGVYRAIDIYLQSHPNLTPQDRTEICRCLNYKKLTMETCKQLARNPKIPPEIAIEALKSRCGNQEHTTSDVKVANKSFSCRYSEEKKKPVVLHLEITEKLAERLKTKGGYNLKVMDSFREGL</sequence>
<gene>
    <name type="ordered locus">At1g50280</name>
    <name type="ORF">F14I3.11</name>
</gene>
<dbReference type="EMBL" id="AC007980">
    <property type="protein sequence ID" value="AAD50054.1"/>
    <property type="status" value="ALT_SEQ"/>
    <property type="molecule type" value="Genomic_DNA"/>
</dbReference>
<dbReference type="EMBL" id="CP002684">
    <property type="protein sequence ID" value="AEE32532.1"/>
    <property type="molecule type" value="Genomic_DNA"/>
</dbReference>
<dbReference type="EMBL" id="AY080713">
    <property type="protein sequence ID" value="AAL85031.1"/>
    <property type="molecule type" value="mRNA"/>
</dbReference>
<dbReference type="EMBL" id="BT003005">
    <property type="protein sequence ID" value="AAO22813.1"/>
    <property type="molecule type" value="mRNA"/>
</dbReference>
<dbReference type="PIR" id="B96539">
    <property type="entry name" value="B96539"/>
</dbReference>
<dbReference type="RefSeq" id="NP_175446.2">
    <property type="nucleotide sequence ID" value="NM_103912.3"/>
</dbReference>
<dbReference type="SMR" id="Q8RXR6"/>
<dbReference type="BioGRID" id="26675">
    <property type="interactions" value="1"/>
</dbReference>
<dbReference type="FunCoup" id="Q8RXR6">
    <property type="interactions" value="307"/>
</dbReference>
<dbReference type="IntAct" id="Q8RXR6">
    <property type="interactions" value="1"/>
</dbReference>
<dbReference type="STRING" id="3702.Q8RXR6"/>
<dbReference type="PaxDb" id="3702-AT1G50280.1"/>
<dbReference type="EnsemblPlants" id="AT1G50280.1">
    <property type="protein sequence ID" value="AT1G50280.1"/>
    <property type="gene ID" value="AT1G50280"/>
</dbReference>
<dbReference type="GeneID" id="841450"/>
<dbReference type="Gramene" id="AT1G50280.1">
    <property type="protein sequence ID" value="AT1G50280.1"/>
    <property type="gene ID" value="AT1G50280"/>
</dbReference>
<dbReference type="KEGG" id="ath:AT1G50280"/>
<dbReference type="Araport" id="AT1G50280"/>
<dbReference type="TAIR" id="AT1G50280">
    <property type="gene designation" value="BPH1"/>
</dbReference>
<dbReference type="eggNOG" id="ENOG502QPQT">
    <property type="taxonomic scope" value="Eukaryota"/>
</dbReference>
<dbReference type="HOGENOM" id="CLU_005994_8_0_1"/>
<dbReference type="InParanoid" id="Q8RXR6"/>
<dbReference type="OMA" id="VFYGSWN"/>
<dbReference type="PhylomeDB" id="Q8RXR6"/>
<dbReference type="UniPathway" id="UPA00143"/>
<dbReference type="PRO" id="PR:Q8RXR6"/>
<dbReference type="Proteomes" id="UP000006548">
    <property type="component" value="Chromosome 1"/>
</dbReference>
<dbReference type="ExpressionAtlas" id="Q8RXR6">
    <property type="expression patterns" value="baseline and differential"/>
</dbReference>
<dbReference type="GO" id="GO:0031463">
    <property type="term" value="C:Cul3-RING ubiquitin ligase complex"/>
    <property type="evidence" value="ECO:0000353"/>
    <property type="project" value="TAIR"/>
</dbReference>
<dbReference type="GO" id="GO:0016567">
    <property type="term" value="P:protein ubiquitination"/>
    <property type="evidence" value="ECO:0007669"/>
    <property type="project" value="UniProtKB-UniPathway"/>
</dbReference>
<dbReference type="GO" id="GO:0009737">
    <property type="term" value="P:response to abscisic acid"/>
    <property type="evidence" value="ECO:0000315"/>
    <property type="project" value="TAIR"/>
</dbReference>
<dbReference type="Gene3D" id="3.30.710.10">
    <property type="entry name" value="Potassium Channel Kv1.1, Chain A"/>
    <property type="match status" value="1"/>
</dbReference>
<dbReference type="InterPro" id="IPR043454">
    <property type="entry name" value="NPH3/RPT2-like"/>
</dbReference>
<dbReference type="InterPro" id="IPR027356">
    <property type="entry name" value="NPH3_dom"/>
</dbReference>
<dbReference type="InterPro" id="IPR011333">
    <property type="entry name" value="SKP1/BTB/POZ_sf"/>
</dbReference>
<dbReference type="PANTHER" id="PTHR32370">
    <property type="entry name" value="OS12G0117600 PROTEIN"/>
    <property type="match status" value="1"/>
</dbReference>
<dbReference type="Pfam" id="PF03000">
    <property type="entry name" value="NPH3"/>
    <property type="match status" value="1"/>
</dbReference>
<dbReference type="SUPFAM" id="SSF54695">
    <property type="entry name" value="POZ domain"/>
    <property type="match status" value="1"/>
</dbReference>
<dbReference type="PROSITE" id="PS51649">
    <property type="entry name" value="NPH3"/>
    <property type="match status" value="1"/>
</dbReference>
<feature type="chain" id="PRO_0000409570" description="BTB/POZ domain-containing protein At1g50280">
    <location>
        <begin position="1"/>
        <end position="525"/>
    </location>
</feature>
<feature type="domain" description="BTB">
    <location>
        <begin position="5"/>
        <end position="79"/>
    </location>
</feature>
<feature type="domain" description="NPH3" evidence="2">
    <location>
        <begin position="200"/>
        <end position="466"/>
    </location>
</feature>
<organism>
    <name type="scientific">Arabidopsis thaliana</name>
    <name type="common">Mouse-ear cress</name>
    <dbReference type="NCBI Taxonomy" id="3702"/>
    <lineage>
        <taxon>Eukaryota</taxon>
        <taxon>Viridiplantae</taxon>
        <taxon>Streptophyta</taxon>
        <taxon>Embryophyta</taxon>
        <taxon>Tracheophyta</taxon>
        <taxon>Spermatophyta</taxon>
        <taxon>Magnoliopsida</taxon>
        <taxon>eudicotyledons</taxon>
        <taxon>Gunneridae</taxon>
        <taxon>Pentapetalae</taxon>
        <taxon>rosids</taxon>
        <taxon>malvids</taxon>
        <taxon>Brassicales</taxon>
        <taxon>Brassicaceae</taxon>
        <taxon>Camelineae</taxon>
        <taxon>Arabidopsis</taxon>
    </lineage>
</organism>
<evidence type="ECO:0000250" key="1"/>
<evidence type="ECO:0000255" key="2">
    <source>
        <dbReference type="PROSITE-ProRule" id="PRU00982"/>
    </source>
</evidence>
<evidence type="ECO:0000269" key="3">
    <source>
    </source>
</evidence>
<evidence type="ECO:0000305" key="4"/>
<proteinExistence type="evidence at transcript level"/>